<name>SMRB_SHESM</name>
<protein>
    <recommendedName>
        <fullName evidence="1">Ribosome rescue factor SmrB</fullName>
        <ecNumber evidence="1">3.1.-.-</ecNumber>
    </recommendedName>
</protein>
<gene>
    <name evidence="1" type="primary">smrB</name>
    <name type="ordered locus">Shewmr4_1414</name>
</gene>
<feature type="chain" id="PRO_1000084363" description="Ribosome rescue factor SmrB">
    <location>
        <begin position="1"/>
        <end position="176"/>
    </location>
</feature>
<feature type="domain" description="Smr" evidence="1">
    <location>
        <begin position="93"/>
        <end position="168"/>
    </location>
</feature>
<reference key="1">
    <citation type="submission" date="2006-08" db="EMBL/GenBank/DDBJ databases">
        <title>Complete sequence of Shewanella sp. MR-4.</title>
        <authorList>
            <consortium name="US DOE Joint Genome Institute"/>
            <person name="Copeland A."/>
            <person name="Lucas S."/>
            <person name="Lapidus A."/>
            <person name="Barry K."/>
            <person name="Detter J.C."/>
            <person name="Glavina del Rio T."/>
            <person name="Hammon N."/>
            <person name="Israni S."/>
            <person name="Dalin E."/>
            <person name="Tice H."/>
            <person name="Pitluck S."/>
            <person name="Kiss H."/>
            <person name="Brettin T."/>
            <person name="Bruce D."/>
            <person name="Han C."/>
            <person name="Tapia R."/>
            <person name="Gilna P."/>
            <person name="Schmutz J."/>
            <person name="Larimer F."/>
            <person name="Land M."/>
            <person name="Hauser L."/>
            <person name="Kyrpides N."/>
            <person name="Mikhailova N."/>
            <person name="Nealson K."/>
            <person name="Konstantinidis K."/>
            <person name="Klappenbach J."/>
            <person name="Tiedje J."/>
            <person name="Richardson P."/>
        </authorList>
    </citation>
    <scope>NUCLEOTIDE SEQUENCE [LARGE SCALE GENOMIC DNA]</scope>
    <source>
        <strain>MR-4</strain>
    </source>
</reference>
<proteinExistence type="inferred from homology"/>
<organism>
    <name type="scientific">Shewanella sp. (strain MR-4)</name>
    <dbReference type="NCBI Taxonomy" id="60480"/>
    <lineage>
        <taxon>Bacteria</taxon>
        <taxon>Pseudomonadati</taxon>
        <taxon>Pseudomonadota</taxon>
        <taxon>Gammaproteobacteria</taxon>
        <taxon>Alteromonadales</taxon>
        <taxon>Shewanellaceae</taxon>
        <taxon>Shewanella</taxon>
    </lineage>
</organism>
<evidence type="ECO:0000255" key="1">
    <source>
        <dbReference type="HAMAP-Rule" id="MF_01042"/>
    </source>
</evidence>
<sequence>MNKDDDKEGMAMFSALIEGIKPIAQDKRHFRTPLKTKQEIELKEQQLHANSYFSDTYQPLLPVQGPMRWLDEGVDSLELKRLRRGDYQPDLLLDLHGYRQSEAKLELAALIQACVKQQSQCCCVMHGYGTGILKQQVPMWLVQHPMVKAFHQAPKEWGGDAALLVLIDIGDQPHRR</sequence>
<dbReference type="EC" id="3.1.-.-" evidence="1"/>
<dbReference type="EMBL" id="CP000446">
    <property type="protein sequence ID" value="ABI38492.1"/>
    <property type="molecule type" value="Genomic_DNA"/>
</dbReference>
<dbReference type="RefSeq" id="WP_011622197.1">
    <property type="nucleotide sequence ID" value="NC_008321.1"/>
</dbReference>
<dbReference type="SMR" id="Q0HKC5"/>
<dbReference type="KEGG" id="she:Shewmr4_1414"/>
<dbReference type="HOGENOM" id="CLU_055978_4_0_6"/>
<dbReference type="GO" id="GO:0004521">
    <property type="term" value="F:RNA endonuclease activity"/>
    <property type="evidence" value="ECO:0007669"/>
    <property type="project" value="UniProtKB-UniRule"/>
</dbReference>
<dbReference type="GO" id="GO:0019843">
    <property type="term" value="F:rRNA binding"/>
    <property type="evidence" value="ECO:0007669"/>
    <property type="project" value="UniProtKB-UniRule"/>
</dbReference>
<dbReference type="GO" id="GO:0072344">
    <property type="term" value="P:rescue of stalled ribosome"/>
    <property type="evidence" value="ECO:0007669"/>
    <property type="project" value="UniProtKB-UniRule"/>
</dbReference>
<dbReference type="Gene3D" id="3.30.1370.110">
    <property type="match status" value="1"/>
</dbReference>
<dbReference type="HAMAP" id="MF_01042">
    <property type="entry name" value="SmrB"/>
    <property type="match status" value="1"/>
</dbReference>
<dbReference type="InterPro" id="IPR002625">
    <property type="entry name" value="Smr_dom"/>
</dbReference>
<dbReference type="InterPro" id="IPR036063">
    <property type="entry name" value="Smr_dom_sf"/>
</dbReference>
<dbReference type="InterPro" id="IPR022990">
    <property type="entry name" value="SmrB-like"/>
</dbReference>
<dbReference type="NCBIfam" id="NF003432">
    <property type="entry name" value="PRK04946.1"/>
    <property type="match status" value="1"/>
</dbReference>
<dbReference type="PANTHER" id="PTHR35562">
    <property type="entry name" value="DNA ENDONUCLEASE SMRA-RELATED"/>
    <property type="match status" value="1"/>
</dbReference>
<dbReference type="PANTHER" id="PTHR35562:SF1">
    <property type="entry name" value="UPF0115 PROTEIN YFCN"/>
    <property type="match status" value="1"/>
</dbReference>
<dbReference type="Pfam" id="PF01713">
    <property type="entry name" value="Smr"/>
    <property type="match status" value="1"/>
</dbReference>
<dbReference type="SMART" id="SM00463">
    <property type="entry name" value="SMR"/>
    <property type="match status" value="1"/>
</dbReference>
<dbReference type="SUPFAM" id="SSF160443">
    <property type="entry name" value="SMR domain-like"/>
    <property type="match status" value="1"/>
</dbReference>
<dbReference type="PROSITE" id="PS50828">
    <property type="entry name" value="SMR"/>
    <property type="match status" value="1"/>
</dbReference>
<accession>Q0HKC5</accession>
<comment type="function">
    <text evidence="1">Acts as a ribosome collision sensor. Detects stalled/collided disomes (pairs of ribosomes where the leading ribosome is stalled and a second ribosome has collided with it) and endonucleolytically cleaves mRNA at the 5' boundary of the stalled ribosome. Stalled/collided disomes form a new interface (primarily via the 30S subunits) that binds SmrB. Cleaved mRNA becomes available for tmRNA ligation, leading to ribosomal subunit dissociation and rescue of stalled ribosomes.</text>
</comment>
<comment type="subunit">
    <text evidence="1">Associates with collided ribosomes, but not with correctly translating polysomes.</text>
</comment>
<comment type="similarity">
    <text evidence="1">Belongs to the SmrB family.</text>
</comment>
<keyword id="KW-0255">Endonuclease</keyword>
<keyword id="KW-0378">Hydrolase</keyword>
<keyword id="KW-0540">Nuclease</keyword>
<keyword id="KW-0694">RNA-binding</keyword>
<keyword id="KW-0699">rRNA-binding</keyword>